<keyword id="KW-0997">Cell inner membrane</keyword>
<keyword id="KW-1003">Cell membrane</keyword>
<keyword id="KW-0378">Hydrolase</keyword>
<keyword id="KW-0472">Membrane</keyword>
<keyword id="KW-0479">Metal-binding</keyword>
<keyword id="KW-0482">Metalloprotease</keyword>
<keyword id="KW-0645">Protease</keyword>
<keyword id="KW-0812">Transmembrane</keyword>
<keyword id="KW-1133">Transmembrane helix</keyword>
<keyword id="KW-0862">Zinc</keyword>
<accession>Q98MC1</accession>
<gene>
    <name type="ordered locus">mll0638</name>
</gene>
<organism>
    <name type="scientific">Mesorhizobium japonicum (strain LMG 29417 / CECT 9101 / MAFF 303099)</name>
    <name type="common">Mesorhizobium loti (strain MAFF 303099)</name>
    <dbReference type="NCBI Taxonomy" id="266835"/>
    <lineage>
        <taxon>Bacteria</taxon>
        <taxon>Pseudomonadati</taxon>
        <taxon>Pseudomonadota</taxon>
        <taxon>Alphaproteobacteria</taxon>
        <taxon>Hyphomicrobiales</taxon>
        <taxon>Phyllobacteriaceae</taxon>
        <taxon>Mesorhizobium</taxon>
    </lineage>
</organism>
<protein>
    <recommendedName>
        <fullName>Putative zinc metalloprotease mll0638</fullName>
        <ecNumber>3.4.24.-</ecNumber>
    </recommendedName>
</protein>
<comment type="cofactor">
    <cofactor evidence="5">
        <name>Zn(2+)</name>
        <dbReference type="ChEBI" id="CHEBI:29105"/>
    </cofactor>
</comment>
<comment type="subcellular location">
    <subcellularLocation>
        <location evidence="1">Cell inner membrane</location>
        <topology evidence="1">Multi-pass membrane protein</topology>
    </subcellularLocation>
</comment>
<comment type="similarity">
    <text evidence="5">Belongs to the peptidase M50B family.</text>
</comment>
<comment type="sequence caution" evidence="5">
    <conflict type="erroneous initiation">
        <sequence resource="EMBL-CDS" id="BAB48192"/>
    </conflict>
</comment>
<dbReference type="EC" id="3.4.24.-"/>
<dbReference type="EMBL" id="BA000012">
    <property type="protein sequence ID" value="BAB48192.1"/>
    <property type="status" value="ALT_INIT"/>
    <property type="molecule type" value="Genomic_DNA"/>
</dbReference>
<dbReference type="SMR" id="Q98MC1"/>
<dbReference type="KEGG" id="mlo:mll0638"/>
<dbReference type="eggNOG" id="COG0750">
    <property type="taxonomic scope" value="Bacteria"/>
</dbReference>
<dbReference type="HOGENOM" id="CLU_025778_1_0_5"/>
<dbReference type="Proteomes" id="UP000000552">
    <property type="component" value="Chromosome"/>
</dbReference>
<dbReference type="GO" id="GO:0005886">
    <property type="term" value="C:plasma membrane"/>
    <property type="evidence" value="ECO:0007669"/>
    <property type="project" value="UniProtKB-SubCell"/>
</dbReference>
<dbReference type="GO" id="GO:0046872">
    <property type="term" value="F:metal ion binding"/>
    <property type="evidence" value="ECO:0007669"/>
    <property type="project" value="UniProtKB-KW"/>
</dbReference>
<dbReference type="GO" id="GO:0004222">
    <property type="term" value="F:metalloendopeptidase activity"/>
    <property type="evidence" value="ECO:0007669"/>
    <property type="project" value="InterPro"/>
</dbReference>
<dbReference type="GO" id="GO:0006508">
    <property type="term" value="P:proteolysis"/>
    <property type="evidence" value="ECO:0007669"/>
    <property type="project" value="UniProtKB-KW"/>
</dbReference>
<dbReference type="CDD" id="cd23081">
    <property type="entry name" value="cpPDZ_EcRseP-like"/>
    <property type="match status" value="1"/>
</dbReference>
<dbReference type="CDD" id="cd06163">
    <property type="entry name" value="S2P-M50_PDZ_RseP-like"/>
    <property type="match status" value="1"/>
</dbReference>
<dbReference type="Gene3D" id="2.30.42.10">
    <property type="match status" value="1"/>
</dbReference>
<dbReference type="InterPro" id="IPR001478">
    <property type="entry name" value="PDZ"/>
</dbReference>
<dbReference type="InterPro" id="IPR041489">
    <property type="entry name" value="PDZ_6"/>
</dbReference>
<dbReference type="InterPro" id="IPR036034">
    <property type="entry name" value="PDZ_sf"/>
</dbReference>
<dbReference type="InterPro" id="IPR004387">
    <property type="entry name" value="Pept_M50_Zn"/>
</dbReference>
<dbReference type="InterPro" id="IPR008915">
    <property type="entry name" value="Peptidase_M50"/>
</dbReference>
<dbReference type="NCBIfam" id="TIGR00054">
    <property type="entry name" value="RIP metalloprotease RseP"/>
    <property type="match status" value="1"/>
</dbReference>
<dbReference type="PANTHER" id="PTHR42837:SF2">
    <property type="entry name" value="MEMBRANE METALLOPROTEASE ARASP2, CHLOROPLASTIC-RELATED"/>
    <property type="match status" value="1"/>
</dbReference>
<dbReference type="PANTHER" id="PTHR42837">
    <property type="entry name" value="REGULATOR OF SIGMA-E PROTEASE RSEP"/>
    <property type="match status" value="1"/>
</dbReference>
<dbReference type="Pfam" id="PF17820">
    <property type="entry name" value="PDZ_6"/>
    <property type="match status" value="1"/>
</dbReference>
<dbReference type="Pfam" id="PF02163">
    <property type="entry name" value="Peptidase_M50"/>
    <property type="match status" value="1"/>
</dbReference>
<dbReference type="SMART" id="SM00228">
    <property type="entry name" value="PDZ"/>
    <property type="match status" value="1"/>
</dbReference>
<dbReference type="SUPFAM" id="SSF50156">
    <property type="entry name" value="PDZ domain-like"/>
    <property type="match status" value="1"/>
</dbReference>
<dbReference type="PROSITE" id="PS50106">
    <property type="entry name" value="PDZ"/>
    <property type="match status" value="1"/>
</dbReference>
<dbReference type="PROSITE" id="PS00142">
    <property type="entry name" value="ZINC_PROTEASE"/>
    <property type="match status" value="1"/>
</dbReference>
<sequence length="367" mass="39923">MFLGTLVPFLFVLTVVVFVHEMGHYLVGRWCGIGVRAFSIGFGPELIGFNDRHGTRWKLCAIPLGGYVKFVGDMNATSSQPTSEELETLTDEERKVAFHTQAIWKRAATVVAGPLFNFLLTIVVFSVLFASYGRYVAEPMVAEVTADSPAAKAGIQPGDRFVSVDGSKVETFGDVQRLVSGRAGDTITFVMLRDGKEVTVTATPQLMEQQDALGNKVKVAVIGVVNNKELGQPRLITYTPVGAVAAAVEETGHVIQRTGQFLQRFAVGREDKCQLGGPVKIADMAGKAAKLGFEWLVQLVALLSVGIGFLNLLPIPPLDGGHLLFYGVEAVIRRPVSERMMEMAYRAGLLLVLCFMGFVFWNDLFGC</sequence>
<evidence type="ECO:0000250" key="1"/>
<evidence type="ECO:0000255" key="2"/>
<evidence type="ECO:0000255" key="3">
    <source>
        <dbReference type="PROSITE-ProRule" id="PRU00143"/>
    </source>
</evidence>
<evidence type="ECO:0000255" key="4">
    <source>
        <dbReference type="PROSITE-ProRule" id="PRU10095"/>
    </source>
</evidence>
<evidence type="ECO:0000305" key="5"/>
<feature type="chain" id="PRO_0000088455" description="Putative zinc metalloprotease mll0638">
    <location>
        <begin position="1"/>
        <end position="367"/>
    </location>
</feature>
<feature type="transmembrane region" description="Helical" evidence="2">
    <location>
        <begin position="108"/>
        <end position="130"/>
    </location>
</feature>
<feature type="transmembrane region" description="Helical" evidence="2">
    <location>
        <begin position="291"/>
        <end position="313"/>
    </location>
</feature>
<feature type="transmembrane region" description="Helical" evidence="2">
    <location>
        <begin position="343"/>
        <end position="365"/>
    </location>
</feature>
<feature type="domain" description="PDZ" evidence="3">
    <location>
        <begin position="121"/>
        <end position="196"/>
    </location>
</feature>
<feature type="active site" evidence="4">
    <location>
        <position position="21"/>
    </location>
</feature>
<feature type="binding site" evidence="4">
    <location>
        <position position="20"/>
    </location>
    <ligand>
        <name>Zn(2+)</name>
        <dbReference type="ChEBI" id="CHEBI:29105"/>
        <note>catalytic</note>
    </ligand>
</feature>
<feature type="binding site" evidence="4">
    <location>
        <position position="24"/>
    </location>
    <ligand>
        <name>Zn(2+)</name>
        <dbReference type="ChEBI" id="CHEBI:29105"/>
        <note>catalytic</note>
    </ligand>
</feature>
<name>Y638_RHILO</name>
<proteinExistence type="inferred from homology"/>
<reference key="1">
    <citation type="journal article" date="2000" name="DNA Res.">
        <title>Complete genome structure of the nitrogen-fixing symbiotic bacterium Mesorhizobium loti.</title>
        <authorList>
            <person name="Kaneko T."/>
            <person name="Nakamura Y."/>
            <person name="Sato S."/>
            <person name="Asamizu E."/>
            <person name="Kato T."/>
            <person name="Sasamoto S."/>
            <person name="Watanabe A."/>
            <person name="Idesawa K."/>
            <person name="Ishikawa A."/>
            <person name="Kawashima K."/>
            <person name="Kimura T."/>
            <person name="Kishida Y."/>
            <person name="Kiyokawa C."/>
            <person name="Kohara M."/>
            <person name="Matsumoto M."/>
            <person name="Matsuno A."/>
            <person name="Mochizuki Y."/>
            <person name="Nakayama S."/>
            <person name="Nakazaki N."/>
            <person name="Shimpo S."/>
            <person name="Sugimoto M."/>
            <person name="Takeuchi C."/>
            <person name="Yamada M."/>
            <person name="Tabata S."/>
        </authorList>
    </citation>
    <scope>NUCLEOTIDE SEQUENCE [LARGE SCALE GENOMIC DNA]</scope>
    <source>
        <strain>LMG 29417 / CECT 9101 / MAFF 303099</strain>
    </source>
</reference>